<evidence type="ECO:0000250" key="1">
    <source>
        <dbReference type="UniProtKB" id="O88871"/>
    </source>
</evidence>
<evidence type="ECO:0000250" key="2">
    <source>
        <dbReference type="UniProtKB" id="Q80T41"/>
    </source>
</evidence>
<evidence type="ECO:0000250" key="3">
    <source>
        <dbReference type="UniProtKB" id="Q9Z0U4"/>
    </source>
</evidence>
<evidence type="ECO:0000255" key="4"/>
<evidence type="ECO:0000256" key="5">
    <source>
        <dbReference type="SAM" id="MobiDB-lite"/>
    </source>
</evidence>
<evidence type="ECO:0000269" key="6">
    <source>
    </source>
</evidence>
<evidence type="ECO:0000269" key="7">
    <source>
    </source>
</evidence>
<evidence type="ECO:0000269" key="8">
    <source>
    </source>
</evidence>
<evidence type="ECO:0000269" key="9">
    <source>
    </source>
</evidence>
<evidence type="ECO:0000269" key="10">
    <source>
    </source>
</evidence>
<evidence type="ECO:0000269" key="11">
    <source>
    </source>
</evidence>
<evidence type="ECO:0000269" key="12">
    <source>
    </source>
</evidence>
<evidence type="ECO:0000269" key="13">
    <source>
    </source>
</evidence>
<evidence type="ECO:0000269" key="14">
    <source>
    </source>
</evidence>
<evidence type="ECO:0000269" key="15">
    <source>
    </source>
</evidence>
<evidence type="ECO:0000269" key="16">
    <source>
    </source>
</evidence>
<evidence type="ECO:0000269" key="17">
    <source>
    </source>
</evidence>
<evidence type="ECO:0000269" key="18">
    <source>
    </source>
</evidence>
<evidence type="ECO:0000269" key="19">
    <source>
    </source>
</evidence>
<evidence type="ECO:0000269" key="20">
    <source>
    </source>
</evidence>
<evidence type="ECO:0000303" key="21">
    <source>
    </source>
</evidence>
<evidence type="ECO:0000303" key="22">
    <source>
    </source>
</evidence>
<evidence type="ECO:0000303" key="23">
    <source>
    </source>
</evidence>
<evidence type="ECO:0000303" key="24">
    <source>
    </source>
</evidence>
<evidence type="ECO:0000303" key="25">
    <source>
    </source>
</evidence>
<evidence type="ECO:0000303" key="26">
    <source ref="6"/>
</evidence>
<evidence type="ECO:0000305" key="27"/>
<evidence type="ECO:0000305" key="28">
    <source>
    </source>
</evidence>
<evidence type="ECO:0007829" key="29">
    <source>
        <dbReference type="PDB" id="4MQE"/>
    </source>
</evidence>
<evidence type="ECO:0007829" key="30">
    <source>
        <dbReference type="PDB" id="4MR7"/>
    </source>
</evidence>
<evidence type="ECO:0007829" key="31">
    <source>
        <dbReference type="PDB" id="4MS4"/>
    </source>
</evidence>
<evidence type="ECO:0007829" key="32">
    <source>
        <dbReference type="PDB" id="4PAS"/>
    </source>
</evidence>
<evidence type="ECO:0007829" key="33">
    <source>
        <dbReference type="PDB" id="6M8R"/>
    </source>
</evidence>
<evidence type="ECO:0007829" key="34">
    <source>
        <dbReference type="PDB" id="6OCP"/>
    </source>
</evidence>
<evidence type="ECO:0007829" key="35">
    <source>
        <dbReference type="PDB" id="6WIV"/>
    </source>
</evidence>
<evidence type="ECO:0007829" key="36">
    <source>
        <dbReference type="PDB" id="7C7Q"/>
    </source>
</evidence>
<evidence type="ECO:0007829" key="37">
    <source>
        <dbReference type="PDB" id="7C7S"/>
    </source>
</evidence>
<evidence type="ECO:0007829" key="38">
    <source>
        <dbReference type="PDB" id="7EB2"/>
    </source>
</evidence>
<organism>
    <name type="scientific">Homo sapiens</name>
    <name type="common">Human</name>
    <dbReference type="NCBI Taxonomy" id="9606"/>
    <lineage>
        <taxon>Eukaryota</taxon>
        <taxon>Metazoa</taxon>
        <taxon>Chordata</taxon>
        <taxon>Craniata</taxon>
        <taxon>Vertebrata</taxon>
        <taxon>Euteleostomi</taxon>
        <taxon>Mammalia</taxon>
        <taxon>Eutheria</taxon>
        <taxon>Euarchontoglires</taxon>
        <taxon>Primates</taxon>
        <taxon>Haplorrhini</taxon>
        <taxon>Catarrhini</taxon>
        <taxon>Hominidae</taxon>
        <taxon>Homo</taxon>
    </lineage>
</organism>
<name>GABR2_HUMAN</name>
<feature type="signal peptide" evidence="4">
    <location>
        <begin position="1"/>
        <end position="41"/>
    </location>
</feature>
<feature type="chain" id="PRO_0000012952" description="Gamma-aminobutyric acid type B receptor subunit 2">
    <location>
        <begin position="42"/>
        <end position="941"/>
    </location>
</feature>
<feature type="topological domain" description="Extracellular" evidence="4">
    <location>
        <begin position="42"/>
        <end position="483"/>
    </location>
</feature>
<feature type="transmembrane region" description="Helical; Name=1" evidence="4">
    <location>
        <begin position="484"/>
        <end position="504"/>
    </location>
</feature>
<feature type="topological domain" description="Cytoplasmic" evidence="4">
    <location>
        <begin position="505"/>
        <end position="522"/>
    </location>
</feature>
<feature type="transmembrane region" description="Helical; Name=2" evidence="4">
    <location>
        <begin position="523"/>
        <end position="543"/>
    </location>
</feature>
<feature type="topological domain" description="Extracellular" evidence="4">
    <location>
        <begin position="544"/>
        <end position="551"/>
    </location>
</feature>
<feature type="transmembrane region" description="Helical; Name=3" evidence="4">
    <location>
        <begin position="552"/>
        <end position="572"/>
    </location>
</feature>
<feature type="topological domain" description="Cytoplasmic" evidence="4">
    <location>
        <begin position="573"/>
        <end position="597"/>
    </location>
</feature>
<feature type="transmembrane region" description="Helical; Name=4" evidence="4">
    <location>
        <begin position="598"/>
        <end position="618"/>
    </location>
</feature>
<feature type="topological domain" description="Extracellular" evidence="4">
    <location>
        <begin position="619"/>
        <end position="654"/>
    </location>
</feature>
<feature type="transmembrane region" description="Helical; Name=5" evidence="4">
    <location>
        <begin position="655"/>
        <end position="675"/>
    </location>
</feature>
<feature type="topological domain" description="Cytoplasmic" evidence="4">
    <location>
        <begin position="676"/>
        <end position="691"/>
    </location>
</feature>
<feature type="transmembrane region" description="Helical; Name=6" evidence="4">
    <location>
        <begin position="692"/>
        <end position="712"/>
    </location>
</feature>
<feature type="topological domain" description="Extracellular" evidence="4">
    <location>
        <begin position="713"/>
        <end position="720"/>
    </location>
</feature>
<feature type="transmembrane region" description="Helical; Name=7" evidence="4">
    <location>
        <begin position="721"/>
        <end position="741"/>
    </location>
</feature>
<feature type="topological domain" description="Cytoplasmic" evidence="4">
    <location>
        <begin position="742"/>
        <end position="941"/>
    </location>
</feature>
<feature type="region of interest" description="Disordered" evidence="5">
    <location>
        <begin position="763"/>
        <end position="790"/>
    </location>
</feature>
<feature type="coiled-coil region" evidence="4">
    <location>
        <begin position="781"/>
        <end position="819"/>
    </location>
</feature>
<feature type="compositionally biased region" description="Polar residues" evidence="5">
    <location>
        <begin position="773"/>
        <end position="787"/>
    </location>
</feature>
<feature type="modified residue" description="Phosphoserine" evidence="2">
    <location>
        <position position="776"/>
    </location>
</feature>
<feature type="modified residue" description="Phosphoserine" evidence="2">
    <location>
        <position position="779"/>
    </location>
</feature>
<feature type="modified residue" description="Phosphothreonine" evidence="2">
    <location>
        <position position="819"/>
    </location>
</feature>
<feature type="modified residue" description="Phosphoserine" evidence="2">
    <location>
        <position position="884"/>
    </location>
</feature>
<feature type="modified residue" description="Phosphoserine" evidence="2">
    <location>
        <position position="893"/>
    </location>
</feature>
<feature type="modified residue" description="Phosphoserine" evidence="2">
    <location>
        <position position="913"/>
    </location>
</feature>
<feature type="modified residue" description="Phosphoserine" evidence="2">
    <location>
        <position position="916"/>
    </location>
</feature>
<feature type="modified residue" description="Phosphoserine" evidence="2">
    <location>
        <position position="920"/>
    </location>
</feature>
<feature type="modified residue" description="Phosphoserine" evidence="2">
    <location>
        <position position="924"/>
    </location>
</feature>
<feature type="glycosylation site" description="N-linked (GlcNAc...) asparagine" evidence="13">
    <location>
        <position position="90"/>
    </location>
</feature>
<feature type="glycosylation site" description="N-linked (GlcNAc...) asparagine" evidence="4">
    <location>
        <position position="298"/>
    </location>
</feature>
<feature type="glycosylation site" description="N-linked (GlcNAc...) asparagine" evidence="13">
    <location>
        <position position="389"/>
    </location>
</feature>
<feature type="glycosylation site" description="N-linked (GlcNAc...) asparagine" evidence="13 14">
    <location>
        <position position="404"/>
    </location>
</feature>
<feature type="glycosylation site" description="N-linked (GlcNAc...) asparagine" evidence="13">
    <location>
        <position position="453"/>
    </location>
</feature>
<feature type="disulfide bond">
    <location>
        <begin position="108"/>
        <end position="135"/>
    </location>
</feature>
<feature type="disulfide bond">
    <location>
        <begin position="237"/>
        <end position="266"/>
    </location>
</feature>
<feature type="disulfide bond">
    <location>
        <begin position="265"/>
        <end position="302"/>
    </location>
</feature>
<feature type="sequence variant" id="VAR_049280" description="In dbSNP:rs1828312690.">
    <original>L</original>
    <variation>P</variation>
    <location>
        <position position="163"/>
    </location>
</feature>
<feature type="sequence variant" id="VAR_079029" description="In NDPLHS; increased basal signaling activity and only weak stimulation by GABA agonist; when injected into Xenopus tadpoles, causes abnormal swimming patterns and increased frequencies of seizure-like behavior compared to wild-type-injected animals; no effect on cell surface expression; dbSNP:rs922847767." evidence="15 16 18">
    <original>A</original>
    <variation>T</variation>
    <location>
        <position position="567"/>
    </location>
</feature>
<feature type="sequence variant" id="VAR_010148" evidence="8">
    <original>Y</original>
    <variation>F</variation>
    <location>
        <position position="628"/>
    </location>
</feature>
<feature type="sequence variant" id="VAR_080569" description="In DEE59; uncertain significance; dbSNP:rs1554689320." evidence="17">
    <original>G</original>
    <variation>W</variation>
    <location>
        <position position="693"/>
    </location>
</feature>
<feature type="sequence variant" id="VAR_080570" description="In DEE59; full signaling activity in the absence of GABA agonist; when injected into Xenopus tadpoles, causes abnormal swimming patterns and increased frequencies of seizure-like behavior compared to wild-type-injected animals; no effect on cell surface expression; dbSNP:rs1554689319." evidence="16 18">
    <original>S</original>
    <variation>I</variation>
    <location>
        <position position="695"/>
    </location>
</feature>
<feature type="sequence variant" id="VAR_080571" description="In DEE59; increased basal signaling activity and no stimulation by GABA agonist; when injected into Xenopus tadpoles, causes abnormal swimming patterns and increased frequencies of seizure-like behavior compared to wild-type-injected animals; no effect on cell surface expression; dbSNP:rs1554689315." evidence="16 18">
    <original>I</original>
    <variation>N</variation>
    <location>
        <position position="705"/>
    </location>
</feature>
<feature type="sequence variant" id="VAR_080572" description="In NDPLHS; increased basal signaling activity and only weak stimulation by GABA agonist; no effect on cell surface expression; dbSNP:rs1554689313." evidence="18">
    <original>A</original>
    <variation>T</variation>
    <location>
        <position position="707"/>
    </location>
</feature>
<feature type="sequence variant" id="VAR_010149" description="In dbSNP:rs10985765." evidence="8">
    <original>T</original>
    <variation>A</variation>
    <location>
        <position position="869"/>
    </location>
</feature>
<feature type="mutagenesis site" description="Impairs interaction with GABBR1. Decreases signaling via G-proteins." evidence="13">
    <original>Y</original>
    <variation>A</variation>
    <location>
        <position position="118"/>
    </location>
</feature>
<feature type="sequence conflict" description="In Ref. 2; AAC99345." evidence="27" ref="2">
    <original>S</original>
    <variation>R</variation>
    <location>
        <position position="6"/>
    </location>
</feature>
<feature type="sequence conflict" description="In Ref. 2; AAC99345." evidence="27" ref="2">
    <original>P</original>
    <variation>R</variation>
    <location>
        <position position="12"/>
    </location>
</feature>
<feature type="sequence conflict" description="In Ref. 5; AAD30389." evidence="27" ref="5">
    <original>G</original>
    <variation>E</variation>
    <location>
        <position position="424"/>
    </location>
</feature>
<feature type="sequence conflict" description="In Ref. 8; AAH35071." evidence="27" ref="8">
    <original>R</original>
    <variation>H</variation>
    <location>
        <position position="797"/>
    </location>
</feature>
<feature type="strand" evidence="31">
    <location>
        <begin position="55"/>
        <end position="62"/>
    </location>
</feature>
<feature type="strand" evidence="29">
    <location>
        <begin position="66"/>
        <end position="68"/>
    </location>
</feature>
<feature type="helix" evidence="31">
    <location>
        <begin position="71"/>
        <end position="90"/>
    </location>
</feature>
<feature type="turn" evidence="31">
    <location>
        <begin position="91"/>
        <end position="96"/>
    </location>
</feature>
<feature type="strand" evidence="31">
    <location>
        <begin position="98"/>
        <end position="105"/>
    </location>
</feature>
<feature type="helix" evidence="31">
    <location>
        <begin position="110"/>
        <end position="123"/>
    </location>
</feature>
<feature type="strand" evidence="31">
    <location>
        <begin position="128"/>
        <end position="132"/>
    </location>
</feature>
<feature type="helix" evidence="31">
    <location>
        <begin position="136"/>
        <end position="145"/>
    </location>
</feature>
<feature type="helix" evidence="31">
    <location>
        <begin position="146"/>
        <end position="149"/>
    </location>
</feature>
<feature type="strand" evidence="31">
    <location>
        <begin position="152"/>
        <end position="157"/>
    </location>
</feature>
<feature type="helix" evidence="31">
    <location>
        <begin position="161"/>
        <end position="164"/>
    </location>
</feature>
<feature type="turn" evidence="31">
    <location>
        <begin position="166"/>
        <end position="168"/>
    </location>
</feature>
<feature type="strand" evidence="31">
    <location>
        <begin position="172"/>
        <end position="176"/>
    </location>
</feature>
<feature type="helix" evidence="31">
    <location>
        <begin position="179"/>
        <end position="181"/>
    </location>
</feature>
<feature type="helix" evidence="31">
    <location>
        <begin position="182"/>
        <end position="192"/>
    </location>
</feature>
<feature type="strand" evidence="31">
    <location>
        <begin position="197"/>
        <end position="205"/>
    </location>
</feature>
<feature type="helix" evidence="31">
    <location>
        <begin position="206"/>
        <end position="219"/>
    </location>
</feature>
<feature type="turn" evidence="31">
    <location>
        <begin position="220"/>
        <end position="223"/>
    </location>
</feature>
<feature type="strand" evidence="31">
    <location>
        <begin position="225"/>
        <end position="234"/>
    </location>
</feature>
<feature type="helix" evidence="31">
    <location>
        <begin position="237"/>
        <end position="245"/>
    </location>
</feature>
<feature type="strand" evidence="31">
    <location>
        <begin position="250"/>
        <end position="254"/>
    </location>
</feature>
<feature type="helix" evidence="31">
    <location>
        <begin position="257"/>
        <end position="269"/>
    </location>
</feature>
<feature type="strand" evidence="35">
    <location>
        <begin position="274"/>
        <end position="276"/>
    </location>
</feature>
<feature type="strand" evidence="31">
    <location>
        <begin position="278"/>
        <end position="283"/>
    </location>
</feature>
<feature type="turn" evidence="31">
    <location>
        <begin position="287"/>
        <end position="290"/>
    </location>
</feature>
<feature type="helix" evidence="31">
    <location>
        <begin position="304"/>
        <end position="311"/>
    </location>
</feature>
<feature type="strand" evidence="31">
    <location>
        <begin position="315"/>
        <end position="319"/>
    </location>
</feature>
<feature type="helix" evidence="31">
    <location>
        <begin position="335"/>
        <end position="345"/>
    </location>
</feature>
<feature type="turn" evidence="30">
    <location>
        <begin position="346"/>
        <end position="348"/>
    </location>
</feature>
<feature type="helix" evidence="31">
    <location>
        <begin position="355"/>
        <end position="372"/>
    </location>
</feature>
<feature type="helix" evidence="31">
    <location>
        <begin position="378"/>
        <end position="387"/>
    </location>
</feature>
<feature type="helix" evidence="31">
    <location>
        <begin position="393"/>
        <end position="404"/>
    </location>
</feature>
<feature type="strand" evidence="31">
    <location>
        <begin position="407"/>
        <end position="410"/>
    </location>
</feature>
<feature type="strand" evidence="31">
    <location>
        <begin position="413"/>
        <end position="418"/>
    </location>
</feature>
<feature type="strand" evidence="31">
    <location>
        <begin position="421"/>
        <end position="423"/>
    </location>
</feature>
<feature type="strand" evidence="31">
    <location>
        <begin position="425"/>
        <end position="431"/>
    </location>
</feature>
<feature type="strand" evidence="31">
    <location>
        <begin position="436"/>
        <end position="443"/>
    </location>
</feature>
<feature type="turn" evidence="31">
    <location>
        <begin position="444"/>
        <end position="447"/>
    </location>
</feature>
<feature type="strand" evidence="31">
    <location>
        <begin position="448"/>
        <end position="451"/>
    </location>
</feature>
<feature type="turn" evidence="31">
    <location>
        <begin position="453"/>
        <end position="455"/>
    </location>
</feature>
<feature type="strand" evidence="31">
    <location>
        <begin position="459"/>
        <end position="462"/>
    </location>
</feature>
<feature type="strand" evidence="36">
    <location>
        <begin position="470"/>
        <end position="474"/>
    </location>
</feature>
<feature type="helix" evidence="37">
    <location>
        <begin position="479"/>
        <end position="505"/>
    </location>
</feature>
<feature type="turn" evidence="37">
    <location>
        <begin position="506"/>
        <end position="508"/>
    </location>
</feature>
<feature type="helix" evidence="37">
    <location>
        <begin position="510"/>
        <end position="513"/>
    </location>
</feature>
<feature type="helix" evidence="37">
    <location>
        <begin position="517"/>
        <end position="538"/>
    </location>
</feature>
<feature type="strand" evidence="37">
    <location>
        <begin position="541"/>
        <end position="544"/>
    </location>
</feature>
<feature type="helix" evidence="37">
    <location>
        <begin position="546"/>
        <end position="550"/>
    </location>
</feature>
<feature type="helix" evidence="37">
    <location>
        <begin position="553"/>
        <end position="583"/>
    </location>
</feature>
<feature type="turn" evidence="37">
    <location>
        <begin position="596"/>
        <end position="598"/>
    </location>
</feature>
<feature type="helix" evidence="37">
    <location>
        <begin position="599"/>
        <end position="618"/>
    </location>
</feature>
<feature type="strand" evidence="37">
    <location>
        <begin position="622"/>
        <end position="627"/>
    </location>
</feature>
<feature type="strand" evidence="37">
    <location>
        <begin position="638"/>
        <end position="641"/>
    </location>
</feature>
<feature type="strand" evidence="37">
    <location>
        <begin position="644"/>
        <end position="649"/>
    </location>
</feature>
<feature type="helix" evidence="37">
    <location>
        <begin position="653"/>
        <end position="677"/>
    </location>
</feature>
<feature type="turn" evidence="36">
    <location>
        <begin position="680"/>
        <end position="682"/>
    </location>
</feature>
<feature type="turn" evidence="36">
    <location>
        <begin position="684"/>
        <end position="686"/>
    </location>
</feature>
<feature type="helix" evidence="37">
    <location>
        <begin position="690"/>
        <end position="712"/>
    </location>
</feature>
<feature type="turn" evidence="38">
    <location>
        <begin position="713"/>
        <end position="715"/>
    </location>
</feature>
<feature type="helix" evidence="37">
    <location>
        <begin position="717"/>
        <end position="740"/>
    </location>
</feature>
<feature type="helix" evidence="37">
    <location>
        <begin position="742"/>
        <end position="748"/>
    </location>
</feature>
<feature type="helix" evidence="32">
    <location>
        <begin position="780"/>
        <end position="816"/>
    </location>
</feature>
<feature type="helix" evidence="33">
    <location>
        <begin position="885"/>
        <end position="890"/>
    </location>
</feature>
<feature type="helix" evidence="34">
    <location>
        <begin position="899"/>
        <end position="902"/>
    </location>
</feature>
<feature type="strand" evidence="33">
    <location>
        <begin position="908"/>
        <end position="911"/>
    </location>
</feature>
<gene>
    <name type="primary">GABBR2</name>
    <name type="synonym">GPR51</name>
    <name type="synonym">GPRC3B</name>
</gene>
<dbReference type="EMBL" id="AJ012188">
    <property type="protein sequence ID" value="CAA09942.1"/>
    <property type="molecule type" value="mRNA"/>
</dbReference>
<dbReference type="EMBL" id="AF069755">
    <property type="protein sequence ID" value="AAC99345.1"/>
    <property type="molecule type" value="mRNA"/>
</dbReference>
<dbReference type="EMBL" id="AF099033">
    <property type="protein sequence ID" value="AAD45867.1"/>
    <property type="molecule type" value="mRNA"/>
</dbReference>
<dbReference type="EMBL" id="AF056085">
    <property type="protein sequence ID" value="AAC63228.1"/>
    <property type="molecule type" value="mRNA"/>
</dbReference>
<dbReference type="EMBL" id="AF095784">
    <property type="protein sequence ID" value="AAD30389.1"/>
    <property type="molecule type" value="mRNA"/>
</dbReference>
<dbReference type="EMBL" id="AF074483">
    <property type="protein sequence ID" value="AAD03336.1"/>
    <property type="molecule type" value="mRNA"/>
</dbReference>
<dbReference type="EMBL" id="AL445495">
    <property type="status" value="NOT_ANNOTATED_CDS"/>
    <property type="molecule type" value="Genomic_DNA"/>
</dbReference>
<dbReference type="EMBL" id="AL353782">
    <property type="status" value="NOT_ANNOTATED_CDS"/>
    <property type="molecule type" value="Genomic_DNA"/>
</dbReference>
<dbReference type="EMBL" id="AL356282">
    <property type="status" value="NOT_ANNOTATED_CDS"/>
    <property type="molecule type" value="Genomic_DNA"/>
</dbReference>
<dbReference type="EMBL" id="AL591502">
    <property type="status" value="NOT_ANNOTATED_CDS"/>
    <property type="molecule type" value="Genomic_DNA"/>
</dbReference>
<dbReference type="EMBL" id="BC035071">
    <property type="protein sequence ID" value="AAH35071.2"/>
    <property type="status" value="ALT_INIT"/>
    <property type="molecule type" value="mRNA"/>
</dbReference>
<dbReference type="CCDS" id="CCDS6736.1"/>
<dbReference type="RefSeq" id="NP_005449.5">
    <property type="nucleotide sequence ID" value="NM_005458.7"/>
</dbReference>
<dbReference type="PDB" id="4F11">
    <property type="method" value="X-ray"/>
    <property type="resolution" value="2.38 A"/>
    <property type="chains" value="A=42-466"/>
</dbReference>
<dbReference type="PDB" id="4F12">
    <property type="method" value="X-ray"/>
    <property type="resolution" value="3.02 A"/>
    <property type="chains" value="A=42-466"/>
</dbReference>
<dbReference type="PDB" id="4MQE">
    <property type="method" value="X-ray"/>
    <property type="resolution" value="2.35 A"/>
    <property type="chains" value="B=42-466"/>
</dbReference>
<dbReference type="PDB" id="4MQF">
    <property type="method" value="X-ray"/>
    <property type="resolution" value="2.22 A"/>
    <property type="chains" value="B=42-466"/>
</dbReference>
<dbReference type="PDB" id="4MR7">
    <property type="method" value="X-ray"/>
    <property type="resolution" value="2.15 A"/>
    <property type="chains" value="B=42-466"/>
</dbReference>
<dbReference type="PDB" id="4MR8">
    <property type="method" value="X-ray"/>
    <property type="resolution" value="2.15 A"/>
    <property type="chains" value="B=42-466"/>
</dbReference>
<dbReference type="PDB" id="4MR9">
    <property type="method" value="X-ray"/>
    <property type="resolution" value="2.35 A"/>
    <property type="chains" value="B=42-466"/>
</dbReference>
<dbReference type="PDB" id="4MRM">
    <property type="method" value="X-ray"/>
    <property type="resolution" value="2.86 A"/>
    <property type="chains" value="B=42-466"/>
</dbReference>
<dbReference type="PDB" id="4MS1">
    <property type="method" value="X-ray"/>
    <property type="resolution" value="2.25 A"/>
    <property type="chains" value="B=42-466"/>
</dbReference>
<dbReference type="PDB" id="4MS3">
    <property type="method" value="X-ray"/>
    <property type="resolution" value="2.50 A"/>
    <property type="chains" value="B=42-466"/>
</dbReference>
<dbReference type="PDB" id="4MS4">
    <property type="method" value="X-ray"/>
    <property type="resolution" value="1.90 A"/>
    <property type="chains" value="B=42-466"/>
</dbReference>
<dbReference type="PDB" id="4PAS">
    <property type="method" value="X-ray"/>
    <property type="resolution" value="1.62 A"/>
    <property type="chains" value="B=779-819"/>
</dbReference>
<dbReference type="PDB" id="6M8R">
    <property type="method" value="X-ray"/>
    <property type="resolution" value="3.20 A"/>
    <property type="chains" value="K/L=876-913"/>
</dbReference>
<dbReference type="PDB" id="6OCP">
    <property type="method" value="X-ray"/>
    <property type="resolution" value="2.35 A"/>
    <property type="chains" value="P/Q/R=895-909"/>
</dbReference>
<dbReference type="PDB" id="6UO8">
    <property type="method" value="EM"/>
    <property type="resolution" value="3.63 A"/>
    <property type="chains" value="B=41-819"/>
</dbReference>
<dbReference type="PDB" id="6UO9">
    <property type="method" value="EM"/>
    <property type="resolution" value="4.80 A"/>
    <property type="chains" value="B=41-819"/>
</dbReference>
<dbReference type="PDB" id="6UOA">
    <property type="method" value="EM"/>
    <property type="resolution" value="6.30 A"/>
    <property type="chains" value="B=41-819"/>
</dbReference>
<dbReference type="PDB" id="6VJM">
    <property type="method" value="EM"/>
    <property type="resolution" value="3.97 A"/>
    <property type="chains" value="B=41-819"/>
</dbReference>
<dbReference type="PDB" id="6W2X">
    <property type="method" value="EM"/>
    <property type="resolution" value="3.60 A"/>
    <property type="chains" value="B=42-941"/>
</dbReference>
<dbReference type="PDB" id="6WIV">
    <property type="method" value="EM"/>
    <property type="resolution" value="3.30 A"/>
    <property type="chains" value="B=1-819"/>
</dbReference>
<dbReference type="PDB" id="7C7Q">
    <property type="method" value="EM"/>
    <property type="resolution" value="3.00 A"/>
    <property type="chains" value="B=41-780"/>
</dbReference>
<dbReference type="PDB" id="7C7S">
    <property type="method" value="EM"/>
    <property type="resolution" value="2.90 A"/>
    <property type="chains" value="B=41-819"/>
</dbReference>
<dbReference type="PDB" id="7CA3">
    <property type="method" value="EM"/>
    <property type="resolution" value="4.50 A"/>
    <property type="chains" value="B=1-787"/>
</dbReference>
<dbReference type="PDB" id="7CA5">
    <property type="method" value="EM"/>
    <property type="resolution" value="7.60 A"/>
    <property type="chains" value="B=1-787"/>
</dbReference>
<dbReference type="PDB" id="7CUM">
    <property type="method" value="EM"/>
    <property type="resolution" value="3.52 A"/>
    <property type="chains" value="B=1-787"/>
</dbReference>
<dbReference type="PDB" id="7EB2">
    <property type="method" value="EM"/>
    <property type="resolution" value="3.50 A"/>
    <property type="chains" value="D=41-819"/>
</dbReference>
<dbReference type="PDBsum" id="4F11"/>
<dbReference type="PDBsum" id="4F12"/>
<dbReference type="PDBsum" id="4MQE"/>
<dbReference type="PDBsum" id="4MQF"/>
<dbReference type="PDBsum" id="4MR7"/>
<dbReference type="PDBsum" id="4MR8"/>
<dbReference type="PDBsum" id="4MR9"/>
<dbReference type="PDBsum" id="4MRM"/>
<dbReference type="PDBsum" id="4MS1"/>
<dbReference type="PDBsum" id="4MS3"/>
<dbReference type="PDBsum" id="4MS4"/>
<dbReference type="PDBsum" id="4PAS"/>
<dbReference type="PDBsum" id="6M8R"/>
<dbReference type="PDBsum" id="6OCP"/>
<dbReference type="PDBsum" id="6UO8"/>
<dbReference type="PDBsum" id="6UO9"/>
<dbReference type="PDBsum" id="6UOA"/>
<dbReference type="PDBsum" id="6VJM"/>
<dbReference type="PDBsum" id="6W2X"/>
<dbReference type="PDBsum" id="6WIV"/>
<dbReference type="PDBsum" id="7C7Q"/>
<dbReference type="PDBsum" id="7C7S"/>
<dbReference type="PDBsum" id="7CA3"/>
<dbReference type="PDBsum" id="7CA5"/>
<dbReference type="PDBsum" id="7CUM"/>
<dbReference type="PDBsum" id="7EB2"/>
<dbReference type="EMDB" id="EMD-20822"/>
<dbReference type="EMDB" id="EMD-20823"/>
<dbReference type="EMDB" id="EMD-20824"/>
<dbReference type="EMDB" id="EMD-21219"/>
<dbReference type="EMDB" id="EMD-21533"/>
<dbReference type="EMDB" id="EMD-21685"/>
<dbReference type="EMDB" id="EMD-30300"/>
<dbReference type="EMDB" id="EMD-30301"/>
<dbReference type="EMDB" id="EMD-30323"/>
<dbReference type="EMDB" id="EMD-30324"/>
<dbReference type="EMDB" id="EMD-30472"/>
<dbReference type="EMDB" id="EMD-31049"/>
<dbReference type="SMR" id="O75899"/>
<dbReference type="BioGRID" id="114938">
    <property type="interactions" value="12"/>
</dbReference>
<dbReference type="ComplexPortal" id="CPX-2955">
    <property type="entry name" value="GABA-B receptor complex"/>
</dbReference>
<dbReference type="CORUM" id="O75899"/>
<dbReference type="DIP" id="DIP-42851N"/>
<dbReference type="FunCoup" id="O75899">
    <property type="interactions" value="943"/>
</dbReference>
<dbReference type="IntAct" id="O75899">
    <property type="interactions" value="10"/>
</dbReference>
<dbReference type="MINT" id="O75899"/>
<dbReference type="STRING" id="9606.ENSP00000259455"/>
<dbReference type="BindingDB" id="O75899"/>
<dbReference type="ChEMBL" id="CHEMBL5034"/>
<dbReference type="DrugBank" id="DB08891">
    <property type="generic name" value="Arbaclofen"/>
</dbReference>
<dbReference type="DrugBank" id="DB08892">
    <property type="generic name" value="Arbaclofen Placarbil"/>
</dbReference>
<dbReference type="DrugBank" id="DB00181">
    <property type="generic name" value="Baclofen"/>
</dbReference>
<dbReference type="DrugBank" id="DB00363">
    <property type="generic name" value="Clozapine"/>
</dbReference>
<dbReference type="DrugBank" id="DB00996">
    <property type="generic name" value="Gabapentin"/>
</dbReference>
<dbReference type="DrugBank" id="DB02530">
    <property type="generic name" value="gamma-Aminobutyric acid"/>
</dbReference>
<dbReference type="DrugBank" id="DB01440">
    <property type="generic name" value="gamma-Hydroxybutyric acid"/>
</dbReference>
<dbReference type="DrugBank" id="DB11920">
    <property type="generic name" value="Lesogaberan"/>
</dbReference>
<dbReference type="DrugBank" id="DB00837">
    <property type="generic name" value="Progabide"/>
</dbReference>
<dbReference type="DrugBank" id="DB05010">
    <property type="generic name" value="SGS-742"/>
</dbReference>
<dbReference type="DrugBank" id="DB09072">
    <property type="generic name" value="Sodium oxybate"/>
</dbReference>
<dbReference type="DrugCentral" id="O75899"/>
<dbReference type="GuidetoPHARMACOLOGY" id="241"/>
<dbReference type="TCDB" id="9.A.14.15.1">
    <property type="family name" value="the g-protein-coupled receptor (gpcr) family"/>
</dbReference>
<dbReference type="GlyCosmos" id="O75899">
    <property type="glycosylation" value="5 sites, No reported glycans"/>
</dbReference>
<dbReference type="GlyGen" id="O75899">
    <property type="glycosylation" value="6 sites, 2 N-linked glycans (2 sites)"/>
</dbReference>
<dbReference type="iPTMnet" id="O75899"/>
<dbReference type="PhosphoSitePlus" id="O75899"/>
<dbReference type="BioMuta" id="GABBR2"/>
<dbReference type="MassIVE" id="O75899"/>
<dbReference type="PaxDb" id="9606-ENSP00000259455"/>
<dbReference type="PeptideAtlas" id="O75899"/>
<dbReference type="ProteomicsDB" id="50252"/>
<dbReference type="ABCD" id="O75899">
    <property type="antibodies" value="2 sequenced antibodies"/>
</dbReference>
<dbReference type="Antibodypedia" id="2939">
    <property type="antibodies" value="596 antibodies from 42 providers"/>
</dbReference>
<dbReference type="DNASU" id="9568"/>
<dbReference type="Ensembl" id="ENST00000259455.4">
    <property type="protein sequence ID" value="ENSP00000259455.2"/>
    <property type="gene ID" value="ENSG00000136928.7"/>
</dbReference>
<dbReference type="GeneID" id="9568"/>
<dbReference type="KEGG" id="hsa:9568"/>
<dbReference type="MANE-Select" id="ENST00000259455.4">
    <property type="protein sequence ID" value="ENSP00000259455.2"/>
    <property type="RefSeq nucleotide sequence ID" value="NM_005458.8"/>
    <property type="RefSeq protein sequence ID" value="NP_005449.5"/>
</dbReference>
<dbReference type="UCSC" id="uc004ays.4">
    <property type="organism name" value="human"/>
</dbReference>
<dbReference type="AGR" id="HGNC:4507"/>
<dbReference type="CTD" id="9568"/>
<dbReference type="DisGeNET" id="9568"/>
<dbReference type="GeneCards" id="GABBR2"/>
<dbReference type="HGNC" id="HGNC:4507">
    <property type="gene designation" value="GABBR2"/>
</dbReference>
<dbReference type="HPA" id="ENSG00000136928">
    <property type="expression patterns" value="Tissue enriched (brain)"/>
</dbReference>
<dbReference type="MalaCards" id="GABBR2"/>
<dbReference type="MIM" id="607340">
    <property type="type" value="gene"/>
</dbReference>
<dbReference type="MIM" id="617903">
    <property type="type" value="phenotype"/>
</dbReference>
<dbReference type="MIM" id="617904">
    <property type="type" value="phenotype"/>
</dbReference>
<dbReference type="neXtProt" id="NX_O75899"/>
<dbReference type="OpenTargets" id="ENSG00000136928"/>
<dbReference type="Orphanet" id="3095">
    <property type="disease" value="Atypical Rett syndrome"/>
</dbReference>
<dbReference type="Orphanet" id="442835">
    <property type="disease" value="Non-specific early-onset epileptic encephalopathy"/>
</dbReference>
<dbReference type="PharmGKB" id="PA28896"/>
<dbReference type="VEuPathDB" id="HostDB:ENSG00000136928"/>
<dbReference type="eggNOG" id="KOG1055">
    <property type="taxonomic scope" value="Eukaryota"/>
</dbReference>
<dbReference type="GeneTree" id="ENSGT00940000155783"/>
<dbReference type="HOGENOM" id="CLU_005240_0_0_1"/>
<dbReference type="InParanoid" id="O75899"/>
<dbReference type="OMA" id="DACTNVN"/>
<dbReference type="OrthoDB" id="2150267at2759"/>
<dbReference type="PAN-GO" id="O75899">
    <property type="GO annotations" value="3 GO annotations based on evolutionary models"/>
</dbReference>
<dbReference type="PhylomeDB" id="O75899"/>
<dbReference type="TreeFam" id="TF313965"/>
<dbReference type="PathwayCommons" id="O75899"/>
<dbReference type="Reactome" id="R-HSA-1296041">
    <property type="pathway name" value="Activation of G protein gated Potassium channels"/>
</dbReference>
<dbReference type="Reactome" id="R-HSA-418594">
    <property type="pathway name" value="G alpha (i) signalling events"/>
</dbReference>
<dbReference type="Reactome" id="R-HSA-420499">
    <property type="pathway name" value="Class C/3 (Metabotropic glutamate/pheromone receptors)"/>
</dbReference>
<dbReference type="Reactome" id="R-HSA-977444">
    <property type="pathway name" value="GABA B receptor activation"/>
</dbReference>
<dbReference type="Reactome" id="R-HSA-997272">
    <property type="pathway name" value="Inhibition of voltage gated Ca2+ channels via Gbeta/gamma subunits"/>
</dbReference>
<dbReference type="SignaLink" id="O75899"/>
<dbReference type="SIGNOR" id="O75899"/>
<dbReference type="BioGRID-ORCS" id="9568">
    <property type="hits" value="8 hits in 1158 CRISPR screens"/>
</dbReference>
<dbReference type="CD-CODE" id="FB4E32DD">
    <property type="entry name" value="Presynaptic clusters and postsynaptic densities"/>
</dbReference>
<dbReference type="ChiTaRS" id="GABBR2">
    <property type="organism name" value="human"/>
</dbReference>
<dbReference type="EvolutionaryTrace" id="O75899"/>
<dbReference type="GeneWiki" id="GABBR2"/>
<dbReference type="GenomeRNAi" id="9568"/>
<dbReference type="Pharos" id="O75899">
    <property type="development level" value="Tclin"/>
</dbReference>
<dbReference type="PRO" id="PR:O75899"/>
<dbReference type="Proteomes" id="UP000005640">
    <property type="component" value="Chromosome 9"/>
</dbReference>
<dbReference type="RNAct" id="O75899">
    <property type="molecule type" value="protein"/>
</dbReference>
<dbReference type="Bgee" id="ENSG00000136928">
    <property type="expression patterns" value="Expressed in Brodmann (1909) area 23 and 143 other cell types or tissues"/>
</dbReference>
<dbReference type="ExpressionAtlas" id="O75899">
    <property type="expression patterns" value="baseline and differential"/>
</dbReference>
<dbReference type="GO" id="GO:0005737">
    <property type="term" value="C:cytoplasm"/>
    <property type="evidence" value="ECO:0007669"/>
    <property type="project" value="Ensembl"/>
</dbReference>
<dbReference type="GO" id="GO:1902712">
    <property type="term" value="C:G protein-coupled GABA receptor complex"/>
    <property type="evidence" value="ECO:0000353"/>
    <property type="project" value="ComplexPortal"/>
</dbReference>
<dbReference type="GO" id="GO:0038039">
    <property type="term" value="C:G protein-coupled receptor heterodimeric complex"/>
    <property type="evidence" value="ECO:0000353"/>
    <property type="project" value="UniProtKB"/>
</dbReference>
<dbReference type="GO" id="GO:1902710">
    <property type="term" value="C:GABA receptor complex"/>
    <property type="evidence" value="ECO:0000314"/>
    <property type="project" value="CAFA"/>
</dbReference>
<dbReference type="GO" id="GO:0043005">
    <property type="term" value="C:neuron projection"/>
    <property type="evidence" value="ECO:0007669"/>
    <property type="project" value="Ensembl"/>
</dbReference>
<dbReference type="GO" id="GO:0005886">
    <property type="term" value="C:plasma membrane"/>
    <property type="evidence" value="ECO:0000314"/>
    <property type="project" value="UniProtKB"/>
</dbReference>
<dbReference type="GO" id="GO:0045211">
    <property type="term" value="C:postsynaptic membrane"/>
    <property type="evidence" value="ECO:0007669"/>
    <property type="project" value="UniProtKB-SubCell"/>
</dbReference>
<dbReference type="GO" id="GO:0004965">
    <property type="term" value="F:G protein-coupled GABA receptor activity"/>
    <property type="evidence" value="ECO:0000304"/>
    <property type="project" value="ProtInc"/>
</dbReference>
<dbReference type="GO" id="GO:0046982">
    <property type="term" value="F:protein heterodimerization activity"/>
    <property type="evidence" value="ECO:0000353"/>
    <property type="project" value="CAFA"/>
</dbReference>
<dbReference type="GO" id="GO:0004888">
    <property type="term" value="F:transmembrane signaling receptor activity"/>
    <property type="evidence" value="ECO:0000318"/>
    <property type="project" value="GO_Central"/>
</dbReference>
<dbReference type="GO" id="GO:0007193">
    <property type="term" value="P:adenylate cyclase-inhibiting G protein-coupled receptor signaling pathway"/>
    <property type="evidence" value="ECO:0000314"/>
    <property type="project" value="ComplexPortal"/>
</dbReference>
<dbReference type="GO" id="GO:0007268">
    <property type="term" value="P:chemical synaptic transmission"/>
    <property type="evidence" value="ECO:0000304"/>
    <property type="project" value="ProtInc"/>
</dbReference>
<dbReference type="GO" id="GO:0007186">
    <property type="term" value="P:G protein-coupled receptor signaling pathway"/>
    <property type="evidence" value="ECO:0000304"/>
    <property type="project" value="ProtInc"/>
</dbReference>
<dbReference type="GO" id="GO:0007214">
    <property type="term" value="P:gamma-aminobutyric acid signaling pathway"/>
    <property type="evidence" value="ECO:0000314"/>
    <property type="project" value="UniProtKB"/>
</dbReference>
<dbReference type="GO" id="GO:0007194">
    <property type="term" value="P:negative regulation of adenylate cyclase activity"/>
    <property type="evidence" value="ECO:0000304"/>
    <property type="project" value="ProtInc"/>
</dbReference>
<dbReference type="GO" id="GO:0150099">
    <property type="term" value="P:neuron-glial cell signaling"/>
    <property type="evidence" value="ECO:0000250"/>
    <property type="project" value="ARUK-UCL"/>
</dbReference>
<dbReference type="GO" id="GO:0051932">
    <property type="term" value="P:synaptic transmission, GABAergic"/>
    <property type="evidence" value="ECO:0000303"/>
    <property type="project" value="ComplexPortal"/>
</dbReference>
<dbReference type="CDD" id="cd15294">
    <property type="entry name" value="7tmC_GABA-B-R2"/>
    <property type="match status" value="1"/>
</dbReference>
<dbReference type="CDD" id="cd06366">
    <property type="entry name" value="PBP1_GABAb_receptor"/>
    <property type="match status" value="1"/>
</dbReference>
<dbReference type="FunFam" id="3.40.50.2300:FF:000072">
    <property type="entry name" value="Gamma-aminobutyric acid type B receptor subunit 2"/>
    <property type="match status" value="2"/>
</dbReference>
<dbReference type="Gene3D" id="3.40.50.2300">
    <property type="match status" value="2"/>
</dbReference>
<dbReference type="InterPro" id="IPR001828">
    <property type="entry name" value="ANF_lig-bd_rcpt"/>
</dbReference>
<dbReference type="InterPro" id="IPR041689">
    <property type="entry name" value="GBR2_CC"/>
</dbReference>
<dbReference type="InterPro" id="IPR002455">
    <property type="entry name" value="GPCR3_GABA-B"/>
</dbReference>
<dbReference type="InterPro" id="IPR000337">
    <property type="entry name" value="GPCR_3"/>
</dbReference>
<dbReference type="InterPro" id="IPR017978">
    <property type="entry name" value="GPCR_3_C"/>
</dbReference>
<dbReference type="InterPro" id="IPR017979">
    <property type="entry name" value="GPCR_3_CS"/>
</dbReference>
<dbReference type="InterPro" id="IPR002457">
    <property type="entry name" value="GPCR_3_GABA_rcpt_B2"/>
</dbReference>
<dbReference type="InterPro" id="IPR028082">
    <property type="entry name" value="Peripla_BP_I"/>
</dbReference>
<dbReference type="PANTHER" id="PTHR10519">
    <property type="entry name" value="GABA-B RECEPTOR"/>
    <property type="match status" value="1"/>
</dbReference>
<dbReference type="PANTHER" id="PTHR10519:SF74">
    <property type="entry name" value="GAMMA-AMINOBUTYRIC ACID TYPE B RECEPTOR SUBUNIT 2"/>
    <property type="match status" value="1"/>
</dbReference>
<dbReference type="Pfam" id="PF00003">
    <property type="entry name" value="7tm_3"/>
    <property type="match status" value="1"/>
</dbReference>
<dbReference type="Pfam" id="PF01094">
    <property type="entry name" value="ANF_receptor"/>
    <property type="match status" value="1"/>
</dbReference>
<dbReference type="Pfam" id="PF18455">
    <property type="entry name" value="GBR2_CC"/>
    <property type="match status" value="1"/>
</dbReference>
<dbReference type="PRINTS" id="PR01178">
    <property type="entry name" value="GABAB2RECPTR"/>
</dbReference>
<dbReference type="PRINTS" id="PR01176">
    <property type="entry name" value="GABABRECEPTR"/>
</dbReference>
<dbReference type="PRINTS" id="PR00248">
    <property type="entry name" value="GPCRMGR"/>
</dbReference>
<dbReference type="SUPFAM" id="SSF53822">
    <property type="entry name" value="Periplasmic binding protein-like I"/>
    <property type="match status" value="1"/>
</dbReference>
<dbReference type="PROSITE" id="PS00981">
    <property type="entry name" value="G_PROTEIN_RECEP_F3_3"/>
    <property type="match status" value="1"/>
</dbReference>
<dbReference type="PROSITE" id="PS50259">
    <property type="entry name" value="G_PROTEIN_RECEP_F3_4"/>
    <property type="match status" value="1"/>
</dbReference>
<keyword id="KW-0002">3D-structure</keyword>
<keyword id="KW-1003">Cell membrane</keyword>
<keyword id="KW-0175">Coiled coil</keyword>
<keyword id="KW-0903">Direct protein sequencing</keyword>
<keyword id="KW-0225">Disease variant</keyword>
<keyword id="KW-1015">Disulfide bond</keyword>
<keyword id="KW-0887">Epilepsy</keyword>
<keyword id="KW-0297">G-protein coupled receptor</keyword>
<keyword id="KW-0325">Glycoprotein</keyword>
<keyword id="KW-0991">Intellectual disability</keyword>
<keyword id="KW-0472">Membrane</keyword>
<keyword id="KW-0597">Phosphoprotein</keyword>
<keyword id="KW-0628">Postsynaptic cell membrane</keyword>
<keyword id="KW-1267">Proteomics identification</keyword>
<keyword id="KW-0675">Receptor</keyword>
<keyword id="KW-1185">Reference proteome</keyword>
<keyword id="KW-0732">Signal</keyword>
<keyword id="KW-0770">Synapse</keyword>
<keyword id="KW-0807">Transducer</keyword>
<keyword id="KW-0812">Transmembrane</keyword>
<keyword id="KW-1133">Transmembrane helix</keyword>
<protein>
    <recommendedName>
        <fullName>Gamma-aminobutyric acid type B receptor subunit 2</fullName>
        <shortName>GABA-B receptor 2</shortName>
        <shortName>GABA-B-R2</shortName>
        <shortName>GABA-BR2</shortName>
        <shortName>GABABR2</shortName>
        <shortName>Gb2</shortName>
    </recommendedName>
    <alternativeName>
        <fullName>G-protein coupled receptor 51</fullName>
    </alternativeName>
    <alternativeName>
        <fullName>HG20</fullName>
    </alternativeName>
</protein>
<comment type="function">
    <text evidence="6 8 11 12 13 14 19 20 27">Component of a heterodimeric G-protein coupled receptor for GABA, formed by GABBR1 and GABBR2 (PubMed:15617512, PubMed:18165688, PubMed:22660477, PubMed:24305054, PubMed:9872316, PubMed:9872744). Within the heterodimeric GABA receptor, only GABBR1 seems to bind agonists, while GABBR2 mediates coupling to G proteins (PubMed:18165688). Ligand binding causes a conformation change that triggers signaling via guanine nucleotide-binding proteins (G proteins) and modulates the activity of down-stream effectors, such as adenylate cyclase (PubMed:10075644, PubMed:10773016, PubMed:24305054). Signaling inhibits adenylate cyclase, stimulates phospholipase A2, activates potassium channels, inactivates voltage-dependent calcium-channels and modulates inositol phospholipid hydrolysis (PubMed:10075644, PubMed:10773016, PubMed:10906333, PubMed:9872744). Plays a critical role in the fine-tuning of inhibitory synaptic transmission (PubMed:22660477, PubMed:9872744). Pre-synaptic GABA receptor inhibits neurotransmitter release by down-regulating high-voltage activated calcium channels, whereas postsynaptic GABA receptor decreases neuronal excitability by activating a prominent inwardly rectifying potassium (Kir) conductance that underlies the late inhibitory postsynaptic potentials (PubMed:10075644, PubMed:22660477, PubMed:9872316, PubMed:9872744). Not only implicated in synaptic inhibition but also in hippocampal long-term potentiation, slow wave sleep, muscle relaxation and antinociception (Probable).</text>
</comment>
<comment type="subunit">
    <text evidence="3 10 11 12 13 14 19 20">Heterodimer of GABBR1 and GABBR2 (PubMed:10773016, PubMed:10906333, PubMed:15617512, PubMed:18165688, PubMed:22660477, PubMed:24305054, PubMed:9872316, PubMed:9872744). Homodimers may form, but are inactive (PubMed:15617512). Interacts (via C-terminus) with ATF4 (via leucine zipper domain) (By similarity).</text>
</comment>
<comment type="interaction">
    <interactant intactId="EBI-715469">
        <id>O75899</id>
    </interactant>
    <interactant intactId="EBI-724156">
        <id>Q9UBS5</id>
        <label>GABBR1</label>
    </interactant>
    <organismsDiffer>false</organismsDiffer>
    <experiments>4</experiments>
</comment>
<comment type="interaction">
    <interactant intactId="EBI-715469">
        <id>O75899</id>
    </interactant>
    <interactant intactId="EBI-16084001">
        <id>Q9UBS5-2</id>
        <label>GABBR1</label>
    </interactant>
    <organismsDiffer>false</organismsDiffer>
    <experiments>6</experiments>
</comment>
<comment type="interaction">
    <interactant intactId="EBI-715469">
        <id>O75899</id>
    </interactant>
    <interactant intactId="EBI-712251">
        <id>P46459</id>
        <label>NSF</label>
    </interactant>
    <organismsDiffer>false</organismsDiffer>
    <experiments>4</experiments>
</comment>
<comment type="interaction">
    <interactant intactId="EBI-715469">
        <id>O75899</id>
    </interactant>
    <interactant intactId="EBI-1043236">
        <id>Q86UR5</id>
        <label>RIMS1</label>
    </interactant>
    <organismsDiffer>false</organismsDiffer>
    <experiments>2</experiments>
</comment>
<comment type="subcellular location">
    <subcellularLocation>
        <location evidence="8 11 19">Cell membrane</location>
        <topology evidence="27">Multi-pass membrane protein</topology>
    </subcellularLocation>
    <subcellularLocation>
        <location evidence="1">Postsynaptic cell membrane</location>
        <topology evidence="27">Multi-pass membrane protein</topology>
    </subcellularLocation>
    <text evidence="11">Coexpression of GABBR1 and GABBR2 is required for GABBR1 maturation and transport to the plasma membrane. In contrast, GABBR2 does not depend on GABBR1 for transport to the cell membrane.</text>
</comment>
<comment type="tissue specificity">
    <text evidence="7 8 9 20">Highly expressed in brain, especially in cerebral cortex, thalamus, hippocampus, frontal, occipital and temporal lobe, occipital pole and cerebellum, followed by corpus callosum, caudate nucleus, spinal cord, amygdala and medulla (PubMed:10087195, PubMed:10328880, PubMed:10727622, PubMed:9872744). Weakly expressed in heart, testis and skeletal muscle (PubMed:10087195, PubMed:10727622).</text>
</comment>
<comment type="domain">
    <text evidence="28">Alpha-helical parts of the C-terminal intracellular region mediate heterodimeric interaction with GABBR1.</text>
</comment>
<comment type="disease" evidence="15 16 18">
    <disease id="DI-05213">
        <name>Neurodevelopmental disorder with poor language and loss of hand skills</name>
        <acronym>NDPLHS</acronym>
        <description>An autosomal dominant disorder characterized by psychomotor developmental stagnation or regression. NDPLHS manifest in the first years of life as loss of purposeful hand movements, loss of language, and intellectual disability.</description>
        <dbReference type="MIM" id="617903"/>
    </disease>
    <text>The disease is caused by variants affecting the gene represented in this entry.</text>
</comment>
<comment type="disease" evidence="16 17 18">
    <disease id="DI-05214">
        <name>Developmental and epileptic encephalopathy 59</name>
        <acronym>DEE59</acronym>
        <description>A form of epileptic encephalopathy, a heterogeneous group of severe early-onset epilepsies characterized by refractory seizures, neurodevelopmental impairment, and poor prognosis. Development is normal prior to seizure onset, after which cognitive and motor delays become apparent. DEE59 is an autosomal dominant condition characterized by onset of refractory seizures in early infancy.</description>
        <dbReference type="MIM" id="617904"/>
    </disease>
    <text>The disease is caused by variants affecting the gene represented in this entry.</text>
</comment>
<comment type="similarity">
    <text evidence="27">Belongs to the G-protein coupled receptor 3 family. GABA-B receptor subfamily.</text>
</comment>
<comment type="sequence caution" evidence="27">
    <conflict type="erroneous initiation">
        <sequence resource="EMBL-CDS" id="AAH35071"/>
    </conflict>
</comment>
<accession>O75899</accession>
<accession>O75974</accession>
<accession>O75975</accession>
<accession>Q5VXZ2</accession>
<accession>Q8WX04</accession>
<accession>Q9P1R2</accession>
<accession>Q9UNR1</accession>
<accession>Q9UNS9</accession>
<reference key="1">
    <citation type="journal article" date="1998" name="Nature">
        <title>Heterodimerization is required for the formation of a functional GABA(B) receptor.</title>
        <authorList>
            <person name="White J.H."/>
            <person name="Wise A."/>
            <person name="Main M.J."/>
            <person name="Green A."/>
            <person name="Fraser N.J."/>
            <person name="Disney G.H."/>
            <person name="Barnes A.A."/>
            <person name="Emson P."/>
            <person name="Foord S.M."/>
            <person name="Marshall F.H."/>
        </authorList>
    </citation>
    <scope>NUCLEOTIDE SEQUENCE [MRNA]</scope>
    <scope>FUNCTION</scope>
    <scope>SUBUNIT</scope>
    <scope>INTERACTION WITH GABBR1</scope>
    <scope>SUBCELLULAR LOCATION</scope>
    <source>
        <tissue evidence="25">Cerebellum</tissue>
    </source>
</reference>
<reference key="2">
    <citation type="journal article" date="1999" name="Genomics">
        <title>Cloning of a novel G-protein-coupled receptor GPR 51 resembling GABAB receptors expressed predominantly in nervous tissues and mapped proximal to the hereditary sensory neuropathy type 1 locus on chromosome 9.</title>
        <authorList>
            <person name="Ng G.Y.K."/>
            <person name="McDonald T."/>
            <person name="Bonnert T."/>
            <person name="Rigby M."/>
            <person name="Heavens R."/>
            <person name="Whiting P."/>
            <person name="Chateauneuf A."/>
            <person name="Coulombe N."/>
            <person name="Kargman S."/>
            <person name="Caskey T."/>
            <person name="Evans J.F."/>
            <person name="O'Neill G.P."/>
            <person name="Liu Q."/>
        </authorList>
    </citation>
    <scope>NUCLEOTIDE SEQUENCE [MRNA]</scope>
    <scope>TISSUE SPECIFICITY</scope>
    <source>
        <tissue evidence="21">Fetal brain</tissue>
    </source>
</reference>
<reference key="3">
    <citation type="journal article" date="1999" name="Mol. Cell. Neurosci.">
        <title>Molecular identification of the human GABABR2: cell surface expression and coupling to adenylyl cyclase in the absence of GABABR1.</title>
        <authorList>
            <person name="Martin S.C."/>
            <person name="Russek S.J."/>
            <person name="Farb D.H."/>
        </authorList>
    </citation>
    <scope>NUCLEOTIDE SEQUENCE [MRNA]</scope>
    <scope>FUNCTION</scope>
    <scope>SUBCELLULAR LOCATION</scope>
    <scope>TISSUE SPECIFICITY</scope>
    <scope>VARIANTS PHE-628 AND ALA-869</scope>
    <source>
        <tissue evidence="22">Brain</tissue>
    </source>
</reference>
<reference key="4">
    <citation type="journal article" date="2000" name="Brain Res.">
        <title>Distribution of the GABA(B) receptor subunit gb2 in rat CNS.</title>
        <authorList>
            <person name="Clark J.A."/>
            <person name="Mezey E."/>
            <person name="Lam A.S."/>
            <person name="Bonner T.I."/>
        </authorList>
    </citation>
    <scope>NUCLEOTIDE SEQUENCE [MRNA]</scope>
    <scope>TISSUE SPECIFICITY</scope>
    <source>
        <tissue evidence="23">Brain</tissue>
    </source>
</reference>
<reference key="5">
    <citation type="submission" date="1998-11" db="EMBL/GenBank/DDBJ databases">
        <title>Cloning and characterization of a novel human GABA-B receptor subtype with high affinity for GABA and low affinity for baclofen.</title>
        <authorList>
            <person name="Liu M."/>
            <person name="Parker R."/>
            <person name="McCrea K."/>
            <person name="Watson J."/>
            <person name="Baker E."/>
            <person name="Sutherland G."/>
            <person name="Herzog H."/>
        </authorList>
    </citation>
    <scope>NUCLEOTIDE SEQUENCE [MRNA]</scope>
</reference>
<reference key="6">
    <citation type="submission" date="1999-01" db="EMBL/GenBank/DDBJ databases">
        <authorList>
            <person name="Borowsky B."/>
            <person name="Laz T."/>
            <person name="Gerald C."/>
        </authorList>
    </citation>
    <scope>NUCLEOTIDE SEQUENCE [MRNA]</scope>
    <source>
        <tissue evidence="26">Hippocampus</tissue>
    </source>
</reference>
<reference key="7">
    <citation type="journal article" date="2004" name="Nature">
        <title>DNA sequence and analysis of human chromosome 9.</title>
        <authorList>
            <person name="Humphray S.J."/>
            <person name="Oliver K."/>
            <person name="Hunt A.R."/>
            <person name="Plumb R.W."/>
            <person name="Loveland J.E."/>
            <person name="Howe K.L."/>
            <person name="Andrews T.D."/>
            <person name="Searle S."/>
            <person name="Hunt S.E."/>
            <person name="Scott C.E."/>
            <person name="Jones M.C."/>
            <person name="Ainscough R."/>
            <person name="Almeida J.P."/>
            <person name="Ambrose K.D."/>
            <person name="Ashwell R.I.S."/>
            <person name="Babbage A.K."/>
            <person name="Babbage S."/>
            <person name="Bagguley C.L."/>
            <person name="Bailey J."/>
            <person name="Banerjee R."/>
            <person name="Barker D.J."/>
            <person name="Barlow K.F."/>
            <person name="Bates K."/>
            <person name="Beasley H."/>
            <person name="Beasley O."/>
            <person name="Bird C.P."/>
            <person name="Bray-Allen S."/>
            <person name="Brown A.J."/>
            <person name="Brown J.Y."/>
            <person name="Burford D."/>
            <person name="Burrill W."/>
            <person name="Burton J."/>
            <person name="Carder C."/>
            <person name="Carter N.P."/>
            <person name="Chapman J.C."/>
            <person name="Chen Y."/>
            <person name="Clarke G."/>
            <person name="Clark S.Y."/>
            <person name="Clee C.M."/>
            <person name="Clegg S."/>
            <person name="Collier R.E."/>
            <person name="Corby N."/>
            <person name="Crosier M."/>
            <person name="Cummings A.T."/>
            <person name="Davies J."/>
            <person name="Dhami P."/>
            <person name="Dunn M."/>
            <person name="Dutta I."/>
            <person name="Dyer L.W."/>
            <person name="Earthrowl M.E."/>
            <person name="Faulkner L."/>
            <person name="Fleming C.J."/>
            <person name="Frankish A."/>
            <person name="Frankland J.A."/>
            <person name="French L."/>
            <person name="Fricker D.G."/>
            <person name="Garner P."/>
            <person name="Garnett J."/>
            <person name="Ghori J."/>
            <person name="Gilbert J.G.R."/>
            <person name="Glison C."/>
            <person name="Grafham D.V."/>
            <person name="Gribble S."/>
            <person name="Griffiths C."/>
            <person name="Griffiths-Jones S."/>
            <person name="Grocock R."/>
            <person name="Guy J."/>
            <person name="Hall R.E."/>
            <person name="Hammond S."/>
            <person name="Harley J.L."/>
            <person name="Harrison E.S.I."/>
            <person name="Hart E.A."/>
            <person name="Heath P.D."/>
            <person name="Henderson C.D."/>
            <person name="Hopkins B.L."/>
            <person name="Howard P.J."/>
            <person name="Howden P.J."/>
            <person name="Huckle E."/>
            <person name="Johnson C."/>
            <person name="Johnson D."/>
            <person name="Joy A.A."/>
            <person name="Kay M."/>
            <person name="Keenan S."/>
            <person name="Kershaw J.K."/>
            <person name="Kimberley A.M."/>
            <person name="King A."/>
            <person name="Knights A."/>
            <person name="Laird G.K."/>
            <person name="Langford C."/>
            <person name="Lawlor S."/>
            <person name="Leongamornlert D.A."/>
            <person name="Leversha M."/>
            <person name="Lloyd C."/>
            <person name="Lloyd D.M."/>
            <person name="Lovell J."/>
            <person name="Martin S."/>
            <person name="Mashreghi-Mohammadi M."/>
            <person name="Matthews L."/>
            <person name="McLaren S."/>
            <person name="McLay K.E."/>
            <person name="McMurray A."/>
            <person name="Milne S."/>
            <person name="Nickerson T."/>
            <person name="Nisbett J."/>
            <person name="Nordsiek G."/>
            <person name="Pearce A.V."/>
            <person name="Peck A.I."/>
            <person name="Porter K.M."/>
            <person name="Pandian R."/>
            <person name="Pelan S."/>
            <person name="Phillimore B."/>
            <person name="Povey S."/>
            <person name="Ramsey Y."/>
            <person name="Rand V."/>
            <person name="Scharfe M."/>
            <person name="Sehra H.K."/>
            <person name="Shownkeen R."/>
            <person name="Sims S.K."/>
            <person name="Skuce C.D."/>
            <person name="Smith M."/>
            <person name="Steward C.A."/>
            <person name="Swarbreck D."/>
            <person name="Sycamore N."/>
            <person name="Tester J."/>
            <person name="Thorpe A."/>
            <person name="Tracey A."/>
            <person name="Tromans A."/>
            <person name="Thomas D.W."/>
            <person name="Wall M."/>
            <person name="Wallis J.M."/>
            <person name="West A.P."/>
            <person name="Whitehead S.L."/>
            <person name="Willey D.L."/>
            <person name="Williams S.A."/>
            <person name="Wilming L."/>
            <person name="Wray P.W."/>
            <person name="Young L."/>
            <person name="Ashurst J.L."/>
            <person name="Coulson A."/>
            <person name="Blocker H."/>
            <person name="Durbin R.M."/>
            <person name="Sulston J.E."/>
            <person name="Hubbard T."/>
            <person name="Jackson M.J."/>
            <person name="Bentley D.R."/>
            <person name="Beck S."/>
            <person name="Rogers J."/>
            <person name="Dunham I."/>
        </authorList>
    </citation>
    <scope>NUCLEOTIDE SEQUENCE [LARGE SCALE GENOMIC DNA]</scope>
</reference>
<reference key="8">
    <citation type="journal article" date="2004" name="Genome Res.">
        <title>The status, quality, and expansion of the NIH full-length cDNA project: the Mammalian Gene Collection (MGC).</title>
        <authorList>
            <consortium name="The MGC Project Team"/>
        </authorList>
    </citation>
    <scope>NUCLEOTIDE SEQUENCE [LARGE SCALE MRNA] OF 14-941</scope>
    <source>
        <tissue evidence="24">Hippocampus</tissue>
    </source>
</reference>
<reference key="9">
    <citation type="journal article" date="1999" name="J. Biol. Chem.">
        <title>Identification of a GABAB receptor subunit, gb2, required for functional GABAB receptor activity.</title>
        <authorList>
            <person name="Ng G.Y.K."/>
            <person name="Clark J."/>
            <person name="Coulombe N."/>
            <person name="Ethier N."/>
            <person name="Hebert T.E."/>
            <person name="Sullivan R."/>
            <person name="Kargman S."/>
            <person name="Chateauneuf A."/>
            <person name="Tsukamoto N."/>
            <person name="McDonald T."/>
            <person name="Whiting P."/>
            <person name="Mezey E."/>
            <person name="Johnson M.P."/>
            <person name="Liu Q."/>
            <person name="Kolakowski L.F. Jr."/>
            <person name="Evans J.F."/>
            <person name="Bonner T.I."/>
            <person name="O'Neill G.P."/>
        </authorList>
    </citation>
    <scope>FUNCTION</scope>
</reference>
<reference key="10">
    <citation type="journal article" date="1999" name="Science">
        <title>Role of heteromer formation in GABAB receptor function.</title>
        <authorList>
            <person name="Kuner R."/>
            <person name="Koehr G."/>
            <person name="Gruenewald S."/>
            <person name="Eisenhardt G."/>
            <person name="Bach A."/>
            <person name="Kornau H.-C."/>
        </authorList>
    </citation>
    <scope>FUNCTION</scope>
    <scope>INTERACTION WITH GABBR1</scope>
    <scope>TISSUE SPECIFICITY</scope>
    <scope>DOMAIN</scope>
</reference>
<reference key="11">
    <citation type="journal article" date="2000" name="J. Biol. Chem.">
        <title>Characterization of gamma-aminobutyric acid receptor GABAB(1e), a GABAB(1) splice variant encoding a truncated receptor.</title>
        <authorList>
            <person name="Schwarz D.A."/>
            <person name="Barry G."/>
            <person name="Eliasof S.D."/>
            <person name="Petroski R.E."/>
            <person name="Conlon P.J."/>
            <person name="Maki R.A."/>
        </authorList>
    </citation>
    <scope>FUNCTION</scope>
    <scope>INTERACTION WITH GABBR1</scope>
</reference>
<reference key="12">
    <citation type="journal article" date="2000" name="J. Pharmacol. Exp. Ther.">
        <title>Coexpression of full-length gamma-aminobutyric acid(B) (GABA(B)) receptors with truncated receptors and metabotropic glutamate receptor 4 supports the GABA(B) heterodimer as the functional receptor.</title>
        <authorList>
            <person name="Sullivan R."/>
            <person name="Chateauneuf A."/>
            <person name="Coulombe N."/>
            <person name="Kolakowski L.F. Jr."/>
            <person name="Johnson M.P."/>
            <person name="Hebert T.E."/>
            <person name="Ethier N."/>
            <person name="Belley M."/>
            <person name="Metters K."/>
            <person name="Abramovitz M."/>
            <person name="O'Neill G.P."/>
            <person name="Ng G.Y.K."/>
        </authorList>
    </citation>
    <scope>FUNCTION</scope>
    <scope>INTERACTION WITH GABBR1</scope>
</reference>
<reference key="13">
    <citation type="journal article" date="2016" name="J. Med. Genet.">
        <title>Identification of novel genetic causes of Rett syndrome-like phenotypes.</title>
        <authorList>
            <person name="Lopes F."/>
            <person name="Barbosa M."/>
            <person name="Ameur A."/>
            <person name="Soares G."/>
            <person name="de Sa J."/>
            <person name="Dias A.I."/>
            <person name="Oliveira G."/>
            <person name="Cabral P."/>
            <person name="Temudo T."/>
            <person name="Calado E."/>
            <person name="Cruz I.F."/>
            <person name="Vieira J.P."/>
            <person name="Oliveira R."/>
            <person name="Esteves S."/>
            <person name="Sauer S."/>
            <person name="Jonasson I."/>
            <person name="Syvaenen A.C."/>
            <person name="Gyllensten U."/>
            <person name="Pinto D."/>
            <person name="Maciel P."/>
        </authorList>
    </citation>
    <scope>VARIANT NDPLHS THR-567</scope>
</reference>
<reference key="14">
    <citation type="journal article" date="2005" name="Biochem. J.">
        <title>Subcellular distribution of GABA(B) receptor homo- and hetero-dimers.</title>
        <authorList>
            <person name="Villemure J.F."/>
            <person name="Adam L."/>
            <person name="Bevan N.J."/>
            <person name="Gearing K."/>
            <person name="Chenier S."/>
            <person name="Bouvier M."/>
        </authorList>
    </citation>
    <scope>FUNCTION</scope>
    <scope>INTERACTION WITH GABBR1</scope>
    <scope>SUBUNIT</scope>
    <scope>SUBCELLULAR LOCATION</scope>
</reference>
<reference key="15">
    <citation type="journal article" date="2008" name="J. Biol. Chem.">
        <title>Direct detection of the interaction between recombinant soluble extracellular regions in the heterodimeric metabotropic gamma-aminobutyric acid receptor.</title>
        <authorList>
            <person name="Nomura R."/>
            <person name="Suzuki Y."/>
            <person name="Kakizuka A."/>
            <person name="Jingami H."/>
        </authorList>
    </citation>
    <scope>FUNCTION</scope>
    <scope>SUBUNIT</scope>
    <scope>INTERACTION WITH GABBR1</scope>
</reference>
<reference key="16">
    <citation type="journal article" date="2012" name="Nat. Neurosci.">
        <title>Structure and functional interaction of the extracellular domain of human GABA(B) receptor GBR2.</title>
        <authorList>
            <person name="Geng Y."/>
            <person name="Xiong D."/>
            <person name="Mosyak L."/>
            <person name="Malito D.L."/>
            <person name="Kniazeff J."/>
            <person name="Chen Y."/>
            <person name="Burmakina S."/>
            <person name="Quick M."/>
            <person name="Bush M."/>
            <person name="Javitch J.A."/>
            <person name="Pin J.P."/>
            <person name="Fan Q.R."/>
        </authorList>
    </citation>
    <scope>X-RAY CRYSTALLOGRAPHY (2.38 ANGSTROMS) OF 42-466</scope>
    <scope>PARTIAL PROTEIN SEQUENCE</scope>
    <scope>FUNCTION</scope>
    <scope>INTERACTION WITH GABBR1</scope>
    <scope>MUTAGENESIS OF TYR-118</scope>
    <scope>GLYCOSYLATION AT ASN-90; ASN-389; ASN-404 AND ASN-453</scope>
    <scope>DISULFIDE BONDS</scope>
</reference>
<reference key="17">
    <citation type="journal article" date="2013" name="Nature">
        <title>Structural mechanism of ligand activation in human GABA(B) receptor.</title>
        <authorList>
            <person name="Geng Y."/>
            <person name="Bush M."/>
            <person name="Mosyak L."/>
            <person name="Wang F."/>
            <person name="Fan Q.R."/>
        </authorList>
    </citation>
    <scope>X-RAY CRYSTALLOGRAPHY (1.9 ANGSTROMS) OF 42-466 IN COMPLEXES WITH GABBR1; AGONISTS AND ANTAGONISTS</scope>
    <scope>FUNCTION</scope>
    <scope>SUBUNIT</scope>
    <scope>GLYCOSYLATION AT ASN-404</scope>
    <scope>DISULFIDE BOND</scope>
</reference>
<reference key="18">
    <citation type="journal article" date="2017" name="Am. J. Hum. Genet.">
        <title>High rate of recurrent de novo mutations in developmental and epileptic encephalopathies.</title>
        <authorList>
            <consortium name="Deciphering Developmental Disorders Study"/>
            <person name="Hamdan F.F."/>
            <person name="Myers C.T."/>
            <person name="Cossette P."/>
            <person name="Lemay P."/>
            <person name="Spiegelman D."/>
            <person name="Laporte A.D."/>
            <person name="Nassif C."/>
            <person name="Diallo O."/>
            <person name="Monlong J."/>
            <person name="Cadieux-Dion M."/>
            <person name="Dobrzeniecka S."/>
            <person name="Meloche C."/>
            <person name="Retterer K."/>
            <person name="Cho M.T."/>
            <person name="Rosenfeld J.A."/>
            <person name="Bi W."/>
            <person name="Massicotte C."/>
            <person name="Miguet M."/>
            <person name="Brunga L."/>
            <person name="Regan B.M."/>
            <person name="Mo K."/>
            <person name="Tam C."/>
            <person name="Schneider A."/>
            <person name="Hollingsworth G."/>
            <person name="FitzPatrick D.R."/>
            <person name="Donaldson A."/>
            <person name="Canham N."/>
            <person name="Blair E."/>
            <person name="Kerr B."/>
            <person name="Fry A.E."/>
            <person name="Thomas R.H."/>
            <person name="Shelagh J."/>
            <person name="Hurst J.A."/>
            <person name="Brittain H."/>
            <person name="Blyth M."/>
            <person name="Lebel R.R."/>
            <person name="Gerkes E.H."/>
            <person name="Davis-Keppen L."/>
            <person name="Stein Q."/>
            <person name="Chung W.K."/>
            <person name="Dorison S.J."/>
            <person name="Benke P.J."/>
            <person name="Fassi E."/>
            <person name="Corsten-Janssen N."/>
            <person name="Kamsteeg E.J."/>
            <person name="Mau-Them F.T."/>
            <person name="Bruel A.L."/>
            <person name="Verloes A."/>
            <person name="Ounap K."/>
            <person name="Wojcik M.H."/>
            <person name="Albert D.V.F."/>
            <person name="Venkateswaran S."/>
            <person name="Ware T."/>
            <person name="Jones D."/>
            <person name="Liu Y.C."/>
            <person name="Mohammad S.S."/>
            <person name="Bizargity P."/>
            <person name="Bacino C.A."/>
            <person name="Leuzzi V."/>
            <person name="Martinelli S."/>
            <person name="Dallapiccola B."/>
            <person name="Tartaglia M."/>
            <person name="Blumkin L."/>
            <person name="Wierenga K.J."/>
            <person name="Purcarin G."/>
            <person name="O'Byrne J.J."/>
            <person name="Stockler S."/>
            <person name="Lehman A."/>
            <person name="Keren B."/>
            <person name="Nougues M.C."/>
            <person name="Mignot C."/>
            <person name="Auvin S."/>
            <person name="Nava C."/>
            <person name="Hiatt S.M."/>
            <person name="Bebin M."/>
            <person name="Shao Y."/>
            <person name="Scaglia F."/>
            <person name="Lalani S.R."/>
            <person name="Frye R.E."/>
            <person name="Jarjour I.T."/>
            <person name="Jacques S."/>
            <person name="Boucher R.M."/>
            <person name="Riou E."/>
            <person name="Srour M."/>
            <person name="Carmant L."/>
            <person name="Lortie A."/>
            <person name="Major P."/>
            <person name="Diadori P."/>
            <person name="Dubeau F."/>
            <person name="D'Anjou G."/>
            <person name="Bourque G."/>
            <person name="Berkovic S.F."/>
            <person name="Sadleir L.G."/>
            <person name="Campeau P.M."/>
            <person name="Kibar Z."/>
            <person name="Lafreniere R.G."/>
            <person name="Girard S.L."/>
            <person name="Mercimek-Mahmutoglu S."/>
            <person name="Boelman C."/>
            <person name="Rouleau G.A."/>
            <person name="Scheffer I.E."/>
            <person name="Mefford H.C."/>
            <person name="Andrade D.M."/>
            <person name="Rossignol E."/>
            <person name="Minassian B.A."/>
            <person name="Michaud J.L."/>
        </authorList>
    </citation>
    <scope>INVOLVEMENT IN DEE59</scope>
    <scope>VARIANT DEE59 TRP-693</scope>
</reference>
<reference key="19">
    <citation type="journal article" date="2017" name="Ann. Neurol.">
        <title>GABBR2 mutations determine phenotype in rett syndrome and epileptic encephalopathy.</title>
        <authorList>
            <person name="Yoo Y."/>
            <person name="Jung J."/>
            <person name="Lee Y.N."/>
            <person name="Lee Y."/>
            <person name="Cho H."/>
            <person name="Na E."/>
            <person name="Hong J."/>
            <person name="Kim E."/>
            <person name="Lee J.S."/>
            <person name="Lee J.S."/>
            <person name="Hong C."/>
            <person name="Park S.Y."/>
            <person name="Wie J."/>
            <person name="Miller K."/>
            <person name="Shur N."/>
            <person name="Clow C."/>
            <person name="Ebel R.S."/>
            <person name="DeBrosse S.D."/>
            <person name="Henderson L.B."/>
            <person name="Willaert R."/>
            <person name="Castaldi C."/>
            <person name="Tikhonova I."/>
            <person name="Bilguevar K."/>
            <person name="Mane S."/>
            <person name="Kim K.J."/>
            <person name="Hwang Y.S."/>
            <person name="Lee S.G."/>
            <person name="So I."/>
            <person name="Lim B.C."/>
            <person name="Choi H.J."/>
            <person name="Seong J.Y."/>
            <person name="Shin Y.B."/>
            <person name="Jung H."/>
            <person name="Chae J.H."/>
            <person name="Choi M."/>
        </authorList>
    </citation>
    <scope>INVOLVEMENT IN NDPLHS</scope>
    <scope>INVOLVEMENT IN DEE59</scope>
    <scope>VARIANT NDPLHS THR-567</scope>
    <scope>VARIANTS DEE59 ILE-695 AND ASN-705</scope>
    <scope>CHARACTERIZATION OF VARIANT NDPLHS THR-567</scope>
    <scope>CHARACTERIZATION OF VARIANTS DEE59 ILE-695 AND ASN-705</scope>
</reference>
<reference key="20">
    <citation type="journal article" date="2018" name="Ann. Neurol.">
        <title>A novel mutation in the transmembrane 6 domain of GABBR2 leads to a Rett-like phenotype.</title>
        <authorList>
            <person name="Vuillaume M.L."/>
            <person name="Jeanne M."/>
            <person name="Xue L."/>
            <person name="Blesson S."/>
            <person name="Denomme-Pichon A.S."/>
            <person name="Alirol S."/>
            <person name="Brulard C."/>
            <person name="Colin E."/>
            <person name="Isidor B."/>
            <person name="Gilbert-Dussardier B."/>
            <person name="Odent S."/>
            <person name="Parent P."/>
            <person name="Donnart A."/>
            <person name="Redon R."/>
            <person name="Bezieau S."/>
            <person name="Rondard P."/>
            <person name="Laumonnier F."/>
            <person name="Toutain A."/>
        </authorList>
    </citation>
    <scope>INVOLVEMENT IN NDPLHS</scope>
    <scope>VARIANT NDPLHS THR-707</scope>
    <scope>CHARACTERIZATION OF VARIANTS NDPLHS THR-567 AND THR-707</scope>
    <scope>CHARACTERIZATION OF VARIANTS DEE59 ILE-695 AND ASN-705</scope>
</reference>
<sequence length="941" mass="105821">MASPRSSGQPGPPPPPPPPPARLLLLLLLPLLLPLAPGAWGWARGAPRPPPSSPPLSIMGLMPLTKEVAKGSIGRGVLPAVELAIEQIRNESLLRPYFLDLRLYDTECDNAKGLKAFYDAIKYGPNHLMVFGGVCPSVTSIIAESLQGWNLVQLSFAATTPVLADKKKYPYFFRTVPSDNAVNPAILKLLKHYQWKRVGTLTQDVQRFSEVRNDLTGVLYGEDIEISDTESFSNDPCTSVKKLKGNDVRIILGQFDQNMAAKVFCCAYEENMYGSKYQWIIPGWYEPSWWEQVHTEANSSRCLRKNLLAAMEGYIGVDFEPLSSKQIKTISGKTPQQYEREYNNKRSGVGPSKFHGYAYDGIWVIAKTLQRAMETLHASSRHQRIQDFNYTDHTLGRIILNAMNETNFFGVTGQVVFRNGERMGTIKFTQFQDSREVKVGEYNAVADTLEIINDTIRFQGSEPPKDKTIILEQLRKISLPLYSILSALTILGMIMASAFLFFNIKNRNQKLIKMSSPYMNNLIILGGMLSYASIFLFGLDGSFVSEKTFETLCTVRTWILTVGYTTAFGAMFAKTWRVHAIFKNVKMKKKIIKDQKLLVIVGGMLLIDLCILICWQAVDPLRRTVEKYSMEPDPAGRDISIRPLLEHCENTHMTIWLGIVYAYKGLLMLFGCFLAWETRNVSIPALNDSKYIGMSVYNVGIMCIIGAAVSFLTRDQPNVQFCIVALVIIFCSTITLCLVFVPKLITLRTNPDAATQNRRFQFTQNQKKEDSKTSTSVTSVNQASTSRLEGLQSENHRLRMKITELDKDLEEVTMQLQDTPEKTTYIKQNHYQELNDILNLGNFTESTDGGKAILKNHLDQNPQLQWNTTEPSRTCKDPIEDINSPEHIQRRLSLQLPILHHAYLPSIGGVDASCVSPCVSPTASPRHRHVPPSFRVMVSGL</sequence>
<proteinExistence type="evidence at protein level"/>